<gene>
    <name evidence="1" type="primary">dinB</name>
    <name type="ordered locus">CPF_1818</name>
</gene>
<organism>
    <name type="scientific">Clostridium perfringens (strain ATCC 13124 / DSM 756 / JCM 1290 / NCIMB 6125 / NCTC 8237 / Type A)</name>
    <dbReference type="NCBI Taxonomy" id="195103"/>
    <lineage>
        <taxon>Bacteria</taxon>
        <taxon>Bacillati</taxon>
        <taxon>Bacillota</taxon>
        <taxon>Clostridia</taxon>
        <taxon>Eubacteriales</taxon>
        <taxon>Clostridiaceae</taxon>
        <taxon>Clostridium</taxon>
    </lineage>
</organism>
<proteinExistence type="inferred from homology"/>
<keyword id="KW-0963">Cytoplasm</keyword>
<keyword id="KW-0227">DNA damage</keyword>
<keyword id="KW-0234">DNA repair</keyword>
<keyword id="KW-0235">DNA replication</keyword>
<keyword id="KW-0238">DNA-binding</keyword>
<keyword id="KW-0239">DNA-directed DNA polymerase</keyword>
<keyword id="KW-0460">Magnesium</keyword>
<keyword id="KW-0479">Metal-binding</keyword>
<keyword id="KW-0515">Mutator protein</keyword>
<keyword id="KW-0548">Nucleotidyltransferase</keyword>
<keyword id="KW-0808">Transferase</keyword>
<name>DPO4_CLOP1</name>
<dbReference type="EC" id="2.7.7.7" evidence="1"/>
<dbReference type="EMBL" id="CP000246">
    <property type="protein sequence ID" value="ABG82968.1"/>
    <property type="molecule type" value="Genomic_DNA"/>
</dbReference>
<dbReference type="RefSeq" id="WP_011590895.1">
    <property type="nucleotide sequence ID" value="NC_008261.1"/>
</dbReference>
<dbReference type="SMR" id="Q0TQ38"/>
<dbReference type="STRING" id="195103.CPF_1818"/>
<dbReference type="PaxDb" id="195103-CPF_1818"/>
<dbReference type="KEGG" id="cpf:CPF_1818"/>
<dbReference type="eggNOG" id="COG0389">
    <property type="taxonomic scope" value="Bacteria"/>
</dbReference>
<dbReference type="HOGENOM" id="CLU_012348_1_2_9"/>
<dbReference type="Proteomes" id="UP000001823">
    <property type="component" value="Chromosome"/>
</dbReference>
<dbReference type="GO" id="GO:0005829">
    <property type="term" value="C:cytosol"/>
    <property type="evidence" value="ECO:0007669"/>
    <property type="project" value="TreeGrafter"/>
</dbReference>
<dbReference type="GO" id="GO:0003684">
    <property type="term" value="F:damaged DNA binding"/>
    <property type="evidence" value="ECO:0007669"/>
    <property type="project" value="InterPro"/>
</dbReference>
<dbReference type="GO" id="GO:0003887">
    <property type="term" value="F:DNA-directed DNA polymerase activity"/>
    <property type="evidence" value="ECO:0007669"/>
    <property type="project" value="UniProtKB-UniRule"/>
</dbReference>
<dbReference type="GO" id="GO:0000287">
    <property type="term" value="F:magnesium ion binding"/>
    <property type="evidence" value="ECO:0007669"/>
    <property type="project" value="UniProtKB-UniRule"/>
</dbReference>
<dbReference type="GO" id="GO:0006261">
    <property type="term" value="P:DNA-templated DNA replication"/>
    <property type="evidence" value="ECO:0007669"/>
    <property type="project" value="UniProtKB-UniRule"/>
</dbReference>
<dbReference type="GO" id="GO:0042276">
    <property type="term" value="P:error-prone translesion synthesis"/>
    <property type="evidence" value="ECO:0007669"/>
    <property type="project" value="TreeGrafter"/>
</dbReference>
<dbReference type="GO" id="GO:0009432">
    <property type="term" value="P:SOS response"/>
    <property type="evidence" value="ECO:0007669"/>
    <property type="project" value="TreeGrafter"/>
</dbReference>
<dbReference type="CDD" id="cd03586">
    <property type="entry name" value="PolY_Pol_IV_kappa"/>
    <property type="match status" value="1"/>
</dbReference>
<dbReference type="FunFam" id="3.30.1490.100:FF:000004">
    <property type="entry name" value="DNA polymerase IV"/>
    <property type="match status" value="1"/>
</dbReference>
<dbReference type="FunFam" id="3.40.1170.60:FF:000001">
    <property type="entry name" value="DNA polymerase IV"/>
    <property type="match status" value="1"/>
</dbReference>
<dbReference type="Gene3D" id="3.30.70.270">
    <property type="match status" value="1"/>
</dbReference>
<dbReference type="Gene3D" id="3.40.1170.60">
    <property type="match status" value="1"/>
</dbReference>
<dbReference type="Gene3D" id="1.10.150.20">
    <property type="entry name" value="5' to 3' exonuclease, C-terminal subdomain"/>
    <property type="match status" value="1"/>
</dbReference>
<dbReference type="Gene3D" id="3.30.1490.100">
    <property type="entry name" value="DNA polymerase, Y-family, little finger domain"/>
    <property type="match status" value="1"/>
</dbReference>
<dbReference type="HAMAP" id="MF_01113">
    <property type="entry name" value="DNApol_IV"/>
    <property type="match status" value="1"/>
</dbReference>
<dbReference type="InterPro" id="IPR043502">
    <property type="entry name" value="DNA/RNA_pol_sf"/>
</dbReference>
<dbReference type="InterPro" id="IPR036775">
    <property type="entry name" value="DNA_pol_Y-fam_lit_finger_sf"/>
</dbReference>
<dbReference type="InterPro" id="IPR017961">
    <property type="entry name" value="DNA_pol_Y-fam_little_finger"/>
</dbReference>
<dbReference type="InterPro" id="IPR050116">
    <property type="entry name" value="DNA_polymerase-Y"/>
</dbReference>
<dbReference type="InterPro" id="IPR022880">
    <property type="entry name" value="DNApol_IV"/>
</dbReference>
<dbReference type="InterPro" id="IPR043128">
    <property type="entry name" value="Rev_trsase/Diguanyl_cyclase"/>
</dbReference>
<dbReference type="InterPro" id="IPR001126">
    <property type="entry name" value="UmuC"/>
</dbReference>
<dbReference type="NCBIfam" id="NF002677">
    <property type="entry name" value="PRK02406.1"/>
    <property type="match status" value="1"/>
</dbReference>
<dbReference type="NCBIfam" id="NF010731">
    <property type="entry name" value="PRK14133.1"/>
    <property type="match status" value="1"/>
</dbReference>
<dbReference type="PANTHER" id="PTHR11076:SF33">
    <property type="entry name" value="DNA POLYMERASE KAPPA"/>
    <property type="match status" value="1"/>
</dbReference>
<dbReference type="PANTHER" id="PTHR11076">
    <property type="entry name" value="DNA REPAIR POLYMERASE UMUC / TRANSFERASE FAMILY MEMBER"/>
    <property type="match status" value="1"/>
</dbReference>
<dbReference type="Pfam" id="PF00817">
    <property type="entry name" value="IMS"/>
    <property type="match status" value="1"/>
</dbReference>
<dbReference type="Pfam" id="PF11799">
    <property type="entry name" value="IMS_C"/>
    <property type="match status" value="1"/>
</dbReference>
<dbReference type="SUPFAM" id="SSF56672">
    <property type="entry name" value="DNA/RNA polymerases"/>
    <property type="match status" value="1"/>
</dbReference>
<dbReference type="SUPFAM" id="SSF100879">
    <property type="entry name" value="Lesion bypass DNA polymerase (Y-family), little finger domain"/>
    <property type="match status" value="1"/>
</dbReference>
<dbReference type="PROSITE" id="PS50173">
    <property type="entry name" value="UMUC"/>
    <property type="match status" value="1"/>
</dbReference>
<protein>
    <recommendedName>
        <fullName evidence="1">DNA polymerase IV</fullName>
        <shortName evidence="1">Pol IV</shortName>
        <ecNumber evidence="1">2.7.7.7</ecNumber>
    </recommendedName>
</protein>
<reference key="1">
    <citation type="journal article" date="2006" name="Genome Res.">
        <title>Skewed genomic variability in strains of the toxigenic bacterial pathogen, Clostridium perfringens.</title>
        <authorList>
            <person name="Myers G.S.A."/>
            <person name="Rasko D.A."/>
            <person name="Cheung J.K."/>
            <person name="Ravel J."/>
            <person name="Seshadri R."/>
            <person name="DeBoy R.T."/>
            <person name="Ren Q."/>
            <person name="Varga J."/>
            <person name="Awad M.M."/>
            <person name="Brinkac L.M."/>
            <person name="Daugherty S.C."/>
            <person name="Haft D.H."/>
            <person name="Dodson R.J."/>
            <person name="Madupu R."/>
            <person name="Nelson W.C."/>
            <person name="Rosovitz M.J."/>
            <person name="Sullivan S.A."/>
            <person name="Khouri H."/>
            <person name="Dimitrov G.I."/>
            <person name="Watkins K.L."/>
            <person name="Mulligan S."/>
            <person name="Benton J."/>
            <person name="Radune D."/>
            <person name="Fisher D.J."/>
            <person name="Atkins H.S."/>
            <person name="Hiscox T."/>
            <person name="Jost B.H."/>
            <person name="Billington S.J."/>
            <person name="Songer J.G."/>
            <person name="McClane B.A."/>
            <person name="Titball R.W."/>
            <person name="Rood J.I."/>
            <person name="Melville S.B."/>
            <person name="Paulsen I.T."/>
        </authorList>
    </citation>
    <scope>NUCLEOTIDE SEQUENCE [LARGE SCALE GENOMIC DNA]</scope>
    <source>
        <strain>ATCC 13124 / DSM 756 / JCM 1290 / NCIMB 6125 / NCTC 8237 / S 107 / Type A</strain>
    </source>
</reference>
<sequence>MKENRKIIHIDMDAFYASIEQRDNPKYKGKPLIVGGDPNRRGVVATCSYEARKYGIHSAMPSLTAYKLCPKAIFIRPRMEVYKKVSRQVMNILNEYSNLVEHLSLDEAFVDVSKSKRCKGSATLMALEIKERIFKEVGLTASAGVSFNKFLAKMASDFRKPDGITVITEENSKDFIRNIPIGKFFGVGRVTKNKLNNIGVFKGEDLLKFSEEELIDIFSDRGKILYEFARGIDNRPVNPYRIRKSIGKEITLREDIEDIDEMIEILERIAERVSESLCLLNKKGKTVTLKVKFNDFKHITRSITLEHFLKEQKEIMECVKDLISIVDFKNKKVRLLGITISSLEENIITEEREQLSFDV</sequence>
<accession>Q0TQ38</accession>
<evidence type="ECO:0000255" key="1">
    <source>
        <dbReference type="HAMAP-Rule" id="MF_01113"/>
    </source>
</evidence>
<comment type="function">
    <text evidence="1">Poorly processive, error-prone DNA polymerase involved in untargeted mutagenesis. Copies undamaged DNA at stalled replication forks, which arise in vivo from mismatched or misaligned primer ends. These misaligned primers can be extended by PolIV. Exhibits no 3'-5' exonuclease (proofreading) activity. May be involved in translesional synthesis, in conjunction with the beta clamp from PolIII.</text>
</comment>
<comment type="catalytic activity">
    <reaction evidence="1">
        <text>DNA(n) + a 2'-deoxyribonucleoside 5'-triphosphate = DNA(n+1) + diphosphate</text>
        <dbReference type="Rhea" id="RHEA:22508"/>
        <dbReference type="Rhea" id="RHEA-COMP:17339"/>
        <dbReference type="Rhea" id="RHEA-COMP:17340"/>
        <dbReference type="ChEBI" id="CHEBI:33019"/>
        <dbReference type="ChEBI" id="CHEBI:61560"/>
        <dbReference type="ChEBI" id="CHEBI:173112"/>
        <dbReference type="EC" id="2.7.7.7"/>
    </reaction>
</comment>
<comment type="cofactor">
    <cofactor evidence="1">
        <name>Mg(2+)</name>
        <dbReference type="ChEBI" id="CHEBI:18420"/>
    </cofactor>
    <text evidence="1">Binds 2 magnesium ions per subunit.</text>
</comment>
<comment type="subunit">
    <text evidence="1">Monomer.</text>
</comment>
<comment type="subcellular location">
    <subcellularLocation>
        <location evidence="1">Cytoplasm</location>
    </subcellularLocation>
</comment>
<comment type="similarity">
    <text evidence="1">Belongs to the DNA polymerase type-Y family.</text>
</comment>
<feature type="chain" id="PRO_1000084883" description="DNA polymerase IV">
    <location>
        <begin position="1"/>
        <end position="359"/>
    </location>
</feature>
<feature type="domain" description="UmuC" evidence="1">
    <location>
        <begin position="7"/>
        <end position="188"/>
    </location>
</feature>
<feature type="active site" evidence="1">
    <location>
        <position position="107"/>
    </location>
</feature>
<feature type="binding site" evidence="1">
    <location>
        <position position="11"/>
    </location>
    <ligand>
        <name>Mg(2+)</name>
        <dbReference type="ChEBI" id="CHEBI:18420"/>
    </ligand>
</feature>
<feature type="binding site" evidence="1">
    <location>
        <position position="106"/>
    </location>
    <ligand>
        <name>Mg(2+)</name>
        <dbReference type="ChEBI" id="CHEBI:18420"/>
    </ligand>
</feature>
<feature type="site" description="Substrate discrimination" evidence="1">
    <location>
        <position position="16"/>
    </location>
</feature>